<accession>P14075</accession>
<accession>Q77YG4</accession>
<reference key="1">
    <citation type="journal article" date="1988" name="J. Gen. Virol.">
        <title>Molecular cloning and complete nucleotide sequence of an adult T cell leukaemia virus/human T cell leukaemia virus type I (ATLV/HTLV-I) isolate of Caribbean origin: relationship to other members of the ATLV/HTLV-I subgroup.</title>
        <authorList>
            <person name="Malik K.T.A."/>
            <person name="Even J."/>
            <person name="Karpas A."/>
        </authorList>
    </citation>
    <scope>NUCLEOTIDE SEQUENCE [GENOMIC DNA]</scope>
</reference>
<protein>
    <recommendedName>
        <fullName>Envelope glycoprotein gp62</fullName>
    </recommendedName>
    <alternativeName>
        <fullName>Env polyprotein</fullName>
    </alternativeName>
    <component>
        <recommendedName>
            <fullName>Surface protein</fullName>
            <shortName>SU</shortName>
        </recommendedName>
        <alternativeName>
            <fullName>Glycoprotein 46</fullName>
            <shortName>gp46</shortName>
        </alternativeName>
    </component>
    <component>
        <recommendedName>
            <fullName>Transmembrane protein</fullName>
            <shortName>TM</shortName>
        </recommendedName>
        <alternativeName>
            <fullName>Glycoprotein 21</fullName>
            <shortName>gp21</shortName>
        </alternativeName>
    </component>
</protein>
<evidence type="ECO:0000250" key="1"/>
<evidence type="ECO:0000255" key="2"/>
<keyword id="KW-0165">Cleavage on pair of basic residues</keyword>
<keyword id="KW-0175">Coiled coil</keyword>
<keyword id="KW-1015">Disulfide bond</keyword>
<keyword id="KW-1169">Fusion of virus membrane with host cell membrane</keyword>
<keyword id="KW-1168">Fusion of virus membrane with host membrane</keyword>
<keyword id="KW-0325">Glycoprotein</keyword>
<keyword id="KW-1032">Host cell membrane</keyword>
<keyword id="KW-1043">Host membrane</keyword>
<keyword id="KW-0945">Host-virus interaction</keyword>
<keyword id="KW-0449">Lipoprotein</keyword>
<keyword id="KW-0472">Membrane</keyword>
<keyword id="KW-0564">Palmitate</keyword>
<keyword id="KW-1185">Reference proteome</keyword>
<keyword id="KW-0732">Signal</keyword>
<keyword id="KW-0812">Transmembrane</keyword>
<keyword id="KW-1133">Transmembrane helix</keyword>
<keyword id="KW-1161">Viral attachment to host cell</keyword>
<keyword id="KW-0261">Viral envelope protein</keyword>
<keyword id="KW-1162">Viral penetration into host cytoplasm</keyword>
<keyword id="KW-0946">Virion</keyword>
<keyword id="KW-1160">Virus entry into host cell</keyword>
<proteinExistence type="inferred from homology"/>
<comment type="function">
    <text evidence="1">The surface protein (SU) attaches the virus to the host cell by binding to its receptor. This interaction triggers the refolding of the transmembrane protein (TM) and is thought to activate its fusogenic potential by unmasking its fusion peptide. Fusion occurs at the host cell plasma membrane (By similarity).</text>
</comment>
<comment type="function">
    <text evidence="1">The transmembrane protein (TM) acts as a class I viral fusion protein. Under the current model, the protein has at least 3 conformational states: pre-fusion native state, pre-hairpin intermediate state, and post-fusion hairpin state. During viral and target cell membrane fusion, the coiled coil regions (heptad repeats) assume a trimer-of-hairpins structure, positioning the fusion peptide in close proximity to the C-terminal region of the ectodomain. The formation of this structure appears to drive apposition and subsequent fusion of viral and target cell membranes. Membranes fusion leads to delivery of the nucleocapsid into the cytoplasm (By similarity).</text>
</comment>
<comment type="subunit">
    <text evidence="1">The mature envelope protein (Env) consists of a trimer of SU-TM heterodimers attached by a labile interchain disulfide bond.</text>
</comment>
<comment type="subcellular location">
    <molecule>Transmembrane protein</molecule>
    <subcellularLocation>
        <location evidence="1">Virion membrane</location>
        <topology evidence="1">Single-pass type I membrane protein</topology>
    </subcellularLocation>
    <subcellularLocation>
        <location evidence="1">Host cell membrane</location>
        <topology evidence="1">Single-pass type I membrane protein</topology>
    </subcellularLocation>
    <text evidence="1">It is probably concentrated at the site of budding and incorporated into the virions possibly by contacts between the cytoplasmic tail of Env and the N-terminus of Gag.</text>
</comment>
<comment type="subcellular location">
    <molecule>Surface protein</molecule>
    <subcellularLocation>
        <location evidence="1">Virion membrane</location>
        <topology evidence="1">Peripheral membrane protein</topology>
    </subcellularLocation>
    <subcellularLocation>
        <location evidence="1">Host cell membrane</location>
        <topology evidence="1">Peripheral membrane protein</topology>
    </subcellularLocation>
    <text evidence="1">The surface protein is not anchored to the viral envelope, but associates with the extravirion surface through its binding to TM. It is probably concentrated at the site of budding and incorporated into the virions possibly by contacts between the cytoplasmic tail of Env and the N-terminus of Gag (By similarity).</text>
</comment>
<comment type="domain">
    <text evidence="1">The 17 amino acids long immunosuppressive region is present in many retroviral envelope proteins. Synthetic peptides derived from this relatively conserved sequence inhibit immune function in vitro and in vivo (By similarity).</text>
</comment>
<comment type="PTM">
    <text evidence="1">Specific enzymatic cleavages in vivo yield mature proteins. Envelope glycoproteins are synthesized as an inactive precursor that is N-glycosylated and processed likely by host cell furin or by a furin-like protease in the Golgi to yield the mature SU and TM proteins. The cleavage site between SU and TM requires the minimal sequence [KR]-X-[KR]-R (By similarity).</text>
</comment>
<comment type="PTM">
    <text evidence="1">The CXXC motif is highly conserved across a broad range of retroviral envelope proteins. It is thought to participate in the formation of a labile disulfide bond possibly with the CX6CC motif present in the transmembrane protein. Isomerization of the intersubunit disulfide bond to an SU intrachain disulfide bond is thought to occur upon receptor recognition in order to allow membrane fusion (By similarity).</text>
</comment>
<comment type="PTM">
    <text evidence="1">The transmembrane protein is palmitoylated.</text>
</comment>
<comment type="miscellaneous">
    <text>HTLV-1 lineages are divided in four clades, A (Cosmopolitan), B (Central African group), C (Melanesian group) and D (New Central African group).</text>
</comment>
<organismHost>
    <name type="scientific">Homo sapiens</name>
    <name type="common">Human</name>
    <dbReference type="NCBI Taxonomy" id="9606"/>
</organismHost>
<dbReference type="EMBL" id="D13784">
    <property type="protein sequence ID" value="BAA02932.1"/>
    <property type="molecule type" value="Genomic_DNA"/>
</dbReference>
<dbReference type="EMBL" id="AF033817">
    <property type="protein sequence ID" value="AAC82582.1"/>
    <property type="molecule type" value="Genomic_DNA"/>
</dbReference>
<dbReference type="PIR" id="D28136">
    <property type="entry name" value="VCLJCN"/>
</dbReference>
<dbReference type="RefSeq" id="NP_057865.1">
    <property type="nucleotide sequence ID" value="NC_001436.1"/>
</dbReference>
<dbReference type="SMR" id="P14075"/>
<dbReference type="IntAct" id="P14075">
    <property type="interactions" value="2"/>
</dbReference>
<dbReference type="MINT" id="P14075"/>
<dbReference type="GlyCosmos" id="P14075">
    <property type="glycosylation" value="5 sites, No reported glycans"/>
</dbReference>
<dbReference type="GeneID" id="1491939"/>
<dbReference type="KEGG" id="vg:1491939"/>
<dbReference type="Proteomes" id="UP000001061">
    <property type="component" value="Segment"/>
</dbReference>
<dbReference type="Proteomes" id="UP000110593">
    <property type="component" value="Genome"/>
</dbReference>
<dbReference type="GO" id="GO:0020002">
    <property type="term" value="C:host cell plasma membrane"/>
    <property type="evidence" value="ECO:0007669"/>
    <property type="project" value="UniProtKB-SubCell"/>
</dbReference>
<dbReference type="GO" id="GO:0016020">
    <property type="term" value="C:membrane"/>
    <property type="evidence" value="ECO:0007669"/>
    <property type="project" value="UniProtKB-KW"/>
</dbReference>
<dbReference type="GO" id="GO:0019031">
    <property type="term" value="C:viral envelope"/>
    <property type="evidence" value="ECO:0007669"/>
    <property type="project" value="UniProtKB-KW"/>
</dbReference>
<dbReference type="GO" id="GO:0055036">
    <property type="term" value="C:virion membrane"/>
    <property type="evidence" value="ECO:0007669"/>
    <property type="project" value="UniProtKB-SubCell"/>
</dbReference>
<dbReference type="GO" id="GO:0019064">
    <property type="term" value="P:fusion of virus membrane with host plasma membrane"/>
    <property type="evidence" value="ECO:0007669"/>
    <property type="project" value="UniProtKB-KW"/>
</dbReference>
<dbReference type="GO" id="GO:0046718">
    <property type="term" value="P:symbiont entry into host cell"/>
    <property type="evidence" value="ECO:0007669"/>
    <property type="project" value="UniProtKB-KW"/>
</dbReference>
<dbReference type="GO" id="GO:0019062">
    <property type="term" value="P:virion attachment to host cell"/>
    <property type="evidence" value="ECO:0007669"/>
    <property type="project" value="UniProtKB-KW"/>
</dbReference>
<dbReference type="CDD" id="cd09851">
    <property type="entry name" value="HTLV-1-like_HR1-HR2"/>
    <property type="match status" value="1"/>
</dbReference>
<dbReference type="Gene3D" id="1.10.287.210">
    <property type="match status" value="1"/>
</dbReference>
<dbReference type="InterPro" id="IPR018154">
    <property type="entry name" value="TLV/ENV_coat_polyprotein"/>
</dbReference>
<dbReference type="PANTHER" id="PTHR10424:SF81">
    <property type="entry name" value="ERVV2 PROTEIN"/>
    <property type="match status" value="1"/>
</dbReference>
<dbReference type="PANTHER" id="PTHR10424">
    <property type="entry name" value="VIRAL ENVELOPE PROTEIN"/>
    <property type="match status" value="1"/>
</dbReference>
<dbReference type="Pfam" id="PF00429">
    <property type="entry name" value="TLV_coat"/>
    <property type="match status" value="2"/>
</dbReference>
<dbReference type="SUPFAM" id="SSF58069">
    <property type="entry name" value="Virus ectodomain"/>
    <property type="match status" value="1"/>
</dbReference>
<sequence>MGKFLATLILFFQFCPLILGDYSPSCCTLTVGVSSYHSKPCNPAQPVCSWTLDLLALSADQALQPPCPNLVSYSSYHATYSLYLFPHWIKKPNRNGGGYYSASYSDPCSLKCPYLGCQSWTCPYTGAVSSPYWKFQQDVNFTQEVSHLNINLHFSKCGFSFSLLVDAPGYDPIWFLNTEPSQLPPTAPPLLSHSNLDHILEPSIPWKSKLLTLVQLTLQSTNYTCIVCIDRASLSTWHVLYSPNVSVPSPSSTPLLYPSLALPAPHLTLPFNWTHCFDPQIQAIVSSPCHNSLILPPFSLSPVPTLGSRSRRAVPVAVWLVSALAMGAGVAGRITGSMSLASGKSLLHEVDKDISQLTQAIVKNHKNLLKIAQYAAQNRRGLDLLFWEQGGLCKALQEQCCFLNITNSHVSILQERPPLENRVLTGWGLNWDLGLSQWAREALQTGITLVALLLLVILAGPCILRQLRHLPSRVRYPHYSLINPESSL</sequence>
<feature type="signal peptide" evidence="2">
    <location>
        <begin position="1"/>
        <end position="20"/>
    </location>
</feature>
<feature type="chain" id="PRO_0000038749" description="Envelope glycoprotein gp62">
    <location>
        <begin position="21"/>
        <end position="488"/>
    </location>
</feature>
<feature type="chain" id="PRO_0000038750" description="Surface protein" evidence="1">
    <location>
        <begin position="21"/>
        <end position="312"/>
    </location>
</feature>
<feature type="chain" id="PRO_0000038751" description="Transmembrane protein" evidence="1">
    <location>
        <begin position="313"/>
        <end position="488"/>
    </location>
</feature>
<feature type="topological domain" description="Extracellular" evidence="2">
    <location>
        <begin position="21"/>
        <end position="442"/>
    </location>
</feature>
<feature type="transmembrane region" description="Helical" evidence="2">
    <location>
        <begin position="443"/>
        <end position="463"/>
    </location>
</feature>
<feature type="topological domain" description="Cytoplasmic" evidence="2">
    <location>
        <begin position="464"/>
        <end position="488"/>
    </location>
</feature>
<feature type="region of interest" description="Fusion peptide" evidence="2">
    <location>
        <begin position="313"/>
        <end position="333"/>
    </location>
</feature>
<feature type="region of interest" description="Immunosuppression" evidence="1">
    <location>
        <begin position="376"/>
        <end position="392"/>
    </location>
</feature>
<feature type="coiled-coil region" evidence="2">
    <location>
        <begin position="341"/>
        <end position="387"/>
    </location>
</feature>
<feature type="coiled-coil region" evidence="2">
    <location>
        <begin position="397"/>
        <end position="429"/>
    </location>
</feature>
<feature type="short sequence motif" description="CXXC">
    <location>
        <begin position="225"/>
        <end position="228"/>
    </location>
</feature>
<feature type="short sequence motif" description="CX6CC">
    <location>
        <begin position="393"/>
        <end position="401"/>
    </location>
</feature>
<feature type="site" description="Cleavage; by host furin" evidence="1">
    <location>
        <begin position="312"/>
        <end position="313"/>
    </location>
</feature>
<feature type="lipid moiety-binding region" description="S-palmitoyl cysteine; by host" evidence="1">
    <location>
        <position position="462"/>
    </location>
</feature>
<feature type="glycosylation site" description="N-linked (GlcNAc...) asparagine; by host" evidence="2">
    <location>
        <position position="140"/>
    </location>
</feature>
<feature type="glycosylation site" description="N-linked (GlcNAc...) asparagine; by host" evidence="2">
    <location>
        <position position="222"/>
    </location>
</feature>
<feature type="glycosylation site" description="N-linked (GlcNAc...) asparagine; by host" evidence="2">
    <location>
        <position position="244"/>
    </location>
</feature>
<feature type="glycosylation site" description="N-linked (GlcNAc...) asparagine; by host" evidence="2">
    <location>
        <position position="272"/>
    </location>
</feature>
<feature type="glycosylation site" description="N-linked (GlcNAc...) asparagine; by host" evidence="2">
    <location>
        <position position="404"/>
    </location>
</feature>
<feature type="disulfide bond" description="Interchain (between SU and TM chains, or C-228 with C-401); in linked form" evidence="1">
    <location>
        <begin position="225"/>
        <end position="401"/>
    </location>
</feature>
<feature type="disulfide bond" evidence="1">
    <location>
        <begin position="225"/>
        <end position="228"/>
    </location>
</feature>
<feature type="disulfide bond" evidence="1">
    <location>
        <begin position="393"/>
        <end position="400"/>
    </location>
</feature>
<gene>
    <name type="primary">env</name>
</gene>
<organism>
    <name type="scientific">Human T-cell leukemia virus 1 (isolate Caribbea HS-35 subtype A)</name>
    <name type="common">HTLV-1</name>
    <dbReference type="NCBI Taxonomy" id="11927"/>
    <lineage>
        <taxon>Viruses</taxon>
        <taxon>Riboviria</taxon>
        <taxon>Pararnavirae</taxon>
        <taxon>Artverviricota</taxon>
        <taxon>Revtraviricetes</taxon>
        <taxon>Ortervirales</taxon>
        <taxon>Retroviridae</taxon>
        <taxon>Orthoretrovirinae</taxon>
        <taxon>Deltaretrovirus</taxon>
        <taxon>Primate T-lymphotropic virus 1</taxon>
    </lineage>
</organism>
<name>ENV_HTL1C</name>